<dbReference type="EMBL" id="CR857177">
    <property type="protein sequence ID" value="CAH89477.1"/>
    <property type="molecule type" value="mRNA"/>
</dbReference>
<dbReference type="RefSeq" id="NP_001127153.1">
    <property type="nucleotide sequence ID" value="NM_001133681.2"/>
</dbReference>
<dbReference type="RefSeq" id="XP_054399332.1">
    <property type="nucleotide sequence ID" value="XM_054543357.1"/>
</dbReference>
<dbReference type="SMR" id="Q5RFI0"/>
<dbReference type="FunCoup" id="Q5RFI0">
    <property type="interactions" value="1136"/>
</dbReference>
<dbReference type="STRING" id="9601.ENSPPYP00000001084"/>
<dbReference type="GeneID" id="100174204"/>
<dbReference type="KEGG" id="pon:100174204"/>
<dbReference type="CTD" id="8799"/>
<dbReference type="eggNOG" id="KOG4186">
    <property type="taxonomic scope" value="Eukaryota"/>
</dbReference>
<dbReference type="InParanoid" id="Q5RFI0"/>
<dbReference type="OrthoDB" id="411017at2759"/>
<dbReference type="Proteomes" id="UP000001595">
    <property type="component" value="Unplaced"/>
</dbReference>
<dbReference type="GO" id="GO:0005778">
    <property type="term" value="C:peroxisomal membrane"/>
    <property type="evidence" value="ECO:0000250"/>
    <property type="project" value="UniProtKB"/>
</dbReference>
<dbReference type="GO" id="GO:0016559">
    <property type="term" value="P:peroxisome fission"/>
    <property type="evidence" value="ECO:0007669"/>
    <property type="project" value="InterPro"/>
</dbReference>
<dbReference type="GO" id="GO:0007031">
    <property type="term" value="P:peroxisome organization"/>
    <property type="evidence" value="ECO:0000250"/>
    <property type="project" value="UniProtKB"/>
</dbReference>
<dbReference type="GO" id="GO:0007165">
    <property type="term" value="P:signal transduction"/>
    <property type="evidence" value="ECO:0000250"/>
    <property type="project" value="UniProtKB"/>
</dbReference>
<dbReference type="InterPro" id="IPR008733">
    <property type="entry name" value="PEX11"/>
</dbReference>
<dbReference type="PANTHER" id="PTHR12652">
    <property type="entry name" value="PEROXISOMAL BIOGENESIS FACTOR 11"/>
    <property type="match status" value="1"/>
</dbReference>
<dbReference type="PANTHER" id="PTHR12652:SF7">
    <property type="entry name" value="PEROXISOMAL MEMBRANE PROTEIN 11B"/>
    <property type="match status" value="1"/>
</dbReference>
<dbReference type="Pfam" id="PF05648">
    <property type="entry name" value="PEX11"/>
    <property type="match status" value="1"/>
</dbReference>
<comment type="function">
    <text evidence="1">Involved in peroxisomal proliferation. May regulate peroxisome division by recruiting the dynamin-related GTPase DNM1L to the peroxisomal membrane. Promotes membrane protrusion and elongation on the peroxisomal surface.</text>
</comment>
<comment type="subunit">
    <text evidence="1">Homodimer. Heterodimer with PEX11G. Interacts with PEX19. Interacts with FIS1.</text>
</comment>
<comment type="subcellular location">
    <subcellularLocation>
        <location evidence="1">Peroxisome membrane</location>
        <topology evidence="1">Single-pass membrane protein</topology>
    </subcellularLocation>
</comment>
<comment type="similarity">
    <text evidence="3">Belongs to the peroxin-11 family.</text>
</comment>
<keyword id="KW-0007">Acetylation</keyword>
<keyword id="KW-0472">Membrane</keyword>
<keyword id="KW-0576">Peroxisome</keyword>
<keyword id="KW-0962">Peroxisome biogenesis</keyword>
<keyword id="KW-1185">Reference proteome</keyword>
<keyword id="KW-0812">Transmembrane</keyword>
<keyword id="KW-1133">Transmembrane helix</keyword>
<reference key="1">
    <citation type="submission" date="2004-11" db="EMBL/GenBank/DDBJ databases">
        <authorList>
            <consortium name="The German cDNA consortium"/>
        </authorList>
    </citation>
    <scope>NUCLEOTIDE SEQUENCE [LARGE SCALE MRNA]</scope>
    <source>
        <tissue>Kidney</tissue>
    </source>
</reference>
<gene>
    <name type="primary">PEX11B</name>
</gene>
<organism>
    <name type="scientific">Pongo abelii</name>
    <name type="common">Sumatran orangutan</name>
    <name type="synonym">Pongo pygmaeus abelii</name>
    <dbReference type="NCBI Taxonomy" id="9601"/>
    <lineage>
        <taxon>Eukaryota</taxon>
        <taxon>Metazoa</taxon>
        <taxon>Chordata</taxon>
        <taxon>Craniata</taxon>
        <taxon>Vertebrata</taxon>
        <taxon>Euteleostomi</taxon>
        <taxon>Mammalia</taxon>
        <taxon>Eutheria</taxon>
        <taxon>Euarchontoglires</taxon>
        <taxon>Primates</taxon>
        <taxon>Haplorrhini</taxon>
        <taxon>Catarrhini</taxon>
        <taxon>Hominidae</taxon>
        <taxon>Pongo</taxon>
    </lineage>
</organism>
<evidence type="ECO:0000250" key="1">
    <source>
        <dbReference type="UniProtKB" id="O96011"/>
    </source>
</evidence>
<evidence type="ECO:0000255" key="2"/>
<evidence type="ECO:0000305" key="3"/>
<proteinExistence type="evidence at transcript level"/>
<feature type="chain" id="PRO_0000105969" description="Peroxisomal membrane protein 11B">
    <location>
        <begin position="1"/>
        <end position="259"/>
    </location>
</feature>
<feature type="transmembrane region" description="Helical" evidence="2">
    <location>
        <begin position="234"/>
        <end position="254"/>
    </location>
</feature>
<feature type="region of interest" description="Interaction with PEX19, PEX11G and FIS1 and peroxisome targeting" evidence="1">
    <location>
        <begin position="211"/>
        <end position="259"/>
    </location>
</feature>
<feature type="modified residue" description="N6-acetyllysine" evidence="1">
    <location>
        <position position="43"/>
    </location>
</feature>
<accession>Q5RFI0</accession>
<sequence length="259" mass="28539">MDAWVRFSAQSQARERLCRAAQYACSLLGHVLQRHGASPELQKQIRQLESHLSLGRKLLRLGNSADALESAKRAVHLSDVVLRFCITVSHLNRALYFACDNVLWAGKSGLAPRVDQEKWAQRSFRYYLFSLIMNLSRDAYEIRLLMEQESSACSRRLKGSGGGVPGGSETGGLGGPGTPGGHLPQLALKLRLQVLLLARVLRGHPPLLLDVVRNACDLFIPLDKLGLWRCGPGIVGLCGLVSSILSILTLIYPWLRLKP</sequence>
<protein>
    <recommendedName>
        <fullName>Peroxisomal membrane protein 11B</fullName>
    </recommendedName>
    <alternativeName>
        <fullName>Peroxin-11B</fullName>
    </alternativeName>
    <alternativeName>
        <fullName>Peroxisomal biogenesis factor 11B</fullName>
    </alternativeName>
    <alternativeName>
        <fullName>Protein PEX11 homolog beta</fullName>
        <shortName>PEX11-beta</shortName>
    </alternativeName>
</protein>
<name>PX11B_PONAB</name>